<comment type="function">
    <text evidence="1 7">Probable polyketide synthase (By similarity). Produces only acylpyrones; in vitro.</text>
</comment>
<comment type="catalytic activity">
    <reaction>
        <text>(E)-4-coumaroyl-CoA + 3 malonyl-CoA + 3 H(+) = 2',4,4',6'-tetrahydroxychalcone + 3 CO2 + 4 CoA</text>
        <dbReference type="Rhea" id="RHEA:11128"/>
        <dbReference type="ChEBI" id="CHEBI:15378"/>
        <dbReference type="ChEBI" id="CHEBI:15413"/>
        <dbReference type="ChEBI" id="CHEBI:16526"/>
        <dbReference type="ChEBI" id="CHEBI:57287"/>
        <dbReference type="ChEBI" id="CHEBI:57384"/>
        <dbReference type="ChEBI" id="CHEBI:85008"/>
        <dbReference type="EC" id="2.3.1.74"/>
    </reaction>
</comment>
<comment type="cofactor">
    <cofactor evidence="1">
        <name>pantetheine 4'-phosphate</name>
        <dbReference type="ChEBI" id="CHEBI:47942"/>
    </cofactor>
    <text evidence="1">Binds 1 phosphopantetheine covalently.</text>
</comment>
<comment type="pathway">
    <text>Secondary metabolite biosynthesis; flavonoid biosynthesis.</text>
</comment>
<comment type="subunit">
    <text evidence="7">Homodimer.</text>
</comment>
<comment type="developmental stage">
    <text evidence="7">Expressed during development. Expressed maximally in early development before cellular aggregation.</text>
</comment>
<comment type="domain">
    <text>Modular protein possessing six classical catalytic domains and a type III polyketide synthase domain. May facilitate covalent transfer of steely N-terminal acyl products directly to the C-terminal type III PKS active sites, which catalyze both iterative polyketide extension and cyclization.</text>
</comment>
<comment type="miscellaneous">
    <text evidence="9">In reference to their hybrid nature and to their discovery in D.discoideum, authors term these type I FAS-type III PKS fusion enzymes 'steely'.</text>
</comment>
<comment type="miscellaneous">
    <text>Encoded by one of the numerous copies of polyketide synthase genes localized in chromosome 1.</text>
</comment>
<comment type="similarity">
    <text evidence="8">In the C-terminal section; belongs to the thiolase-like superfamily. Chalcone/stilbene synthases family.</text>
</comment>
<evidence type="ECO:0000250" key="1"/>
<evidence type="ECO:0000255" key="2">
    <source>
        <dbReference type="PROSITE-ProRule" id="PRU00258"/>
    </source>
</evidence>
<evidence type="ECO:0000255" key="3">
    <source>
        <dbReference type="PROSITE-ProRule" id="PRU01348"/>
    </source>
</evidence>
<evidence type="ECO:0000255" key="4">
    <source>
        <dbReference type="PROSITE-ProRule" id="PRU01363"/>
    </source>
</evidence>
<evidence type="ECO:0000255" key="5">
    <source>
        <dbReference type="PROSITE-ProRule" id="PRU10022"/>
    </source>
</evidence>
<evidence type="ECO:0000256" key="6">
    <source>
        <dbReference type="SAM" id="MobiDB-lite"/>
    </source>
</evidence>
<evidence type="ECO:0000269" key="7">
    <source>
    </source>
</evidence>
<evidence type="ECO:0000305" key="8"/>
<evidence type="ECO:0000305" key="9">
    <source>
    </source>
</evidence>
<evidence type="ECO:0007829" key="10">
    <source>
        <dbReference type="PDB" id="2H84"/>
    </source>
</evidence>
<feature type="chain" id="PRO_0000377901" description="Probable polyketide synthase 1">
    <location>
        <begin position="1"/>
        <end position="3147"/>
    </location>
</feature>
<feature type="domain" description="Ketosynthase family 3 (KS3)" evidence="3">
    <location>
        <begin position="12"/>
        <end position="457"/>
    </location>
</feature>
<feature type="domain" description="PKS/mFAS DH" evidence="4">
    <location>
        <begin position="976"/>
        <end position="1298"/>
    </location>
</feature>
<feature type="domain" description="Carrier" evidence="2">
    <location>
        <begin position="2568"/>
        <end position="2645"/>
    </location>
</feature>
<feature type="region of interest" description="Disordered" evidence="6">
    <location>
        <begin position="345"/>
        <end position="369"/>
    </location>
</feature>
<feature type="region of interest" description="Acyl/malonyl transferase">
    <location>
        <begin position="672"/>
        <end position="705"/>
    </location>
</feature>
<feature type="region of interest" description="N-terminal hotdog fold" evidence="4">
    <location>
        <begin position="976"/>
        <end position="1127"/>
    </location>
</feature>
<feature type="region of interest" description="C-terminal hotdog fold" evidence="4">
    <location>
        <begin position="1149"/>
        <end position="1298"/>
    </location>
</feature>
<feature type="region of interest" description="Disordered" evidence="6">
    <location>
        <begin position="2723"/>
        <end position="2747"/>
    </location>
</feature>
<feature type="region of interest" description="Chalcone synthase">
    <location>
        <begin position="2789"/>
        <end position="3147"/>
    </location>
</feature>
<feature type="compositionally biased region" description="Acidic residues" evidence="6">
    <location>
        <begin position="354"/>
        <end position="364"/>
    </location>
</feature>
<feature type="compositionally biased region" description="Polar residues" evidence="6">
    <location>
        <begin position="2738"/>
        <end position="2747"/>
    </location>
</feature>
<feature type="active site" description="For beta-ketoacyl synthase activity" evidence="3">
    <location>
        <position position="180"/>
    </location>
</feature>
<feature type="active site" description="For beta-ketoacyl synthase activity" evidence="3">
    <location>
        <position position="319"/>
    </location>
</feature>
<feature type="active site" description="For beta-ketoacyl synthase activity" evidence="3">
    <location>
        <position position="380"/>
    </location>
</feature>
<feature type="active site" description="For acyl/malonyl transferase activity" evidence="5">
    <location>
        <position position="682"/>
    </location>
</feature>
<feature type="active site" description="Proton acceptor; for dehydratase activity" evidence="4">
    <location>
        <position position="1014"/>
    </location>
</feature>
<feature type="active site" description="Proton donor; for dehydratase activity" evidence="4">
    <location>
        <position position="1209"/>
    </location>
</feature>
<feature type="active site" evidence="5">
    <location>
        <position position="2930"/>
    </location>
</feature>
<feature type="modified residue" description="O-(pantetheine 4'-phosphoryl)serine" evidence="2">
    <location>
        <position position="2605"/>
    </location>
</feature>
<feature type="strand" evidence="10">
    <location>
        <begin position="2788"/>
        <end position="2795"/>
    </location>
</feature>
<feature type="strand" evidence="10">
    <location>
        <begin position="2797"/>
        <end position="2799"/>
    </location>
</feature>
<feature type="helix" evidence="10">
    <location>
        <begin position="2803"/>
        <end position="2813"/>
    </location>
</feature>
<feature type="helix" evidence="10">
    <location>
        <begin position="2818"/>
        <end position="2829"/>
    </location>
</feature>
<feature type="helix" evidence="10">
    <location>
        <begin position="2845"/>
        <end position="2847"/>
    </location>
</feature>
<feature type="helix" evidence="10">
    <location>
        <begin position="2849"/>
        <end position="2854"/>
    </location>
</feature>
<feature type="helix" evidence="10">
    <location>
        <begin position="2857"/>
        <end position="2883"/>
    </location>
</feature>
<feature type="helix" evidence="10">
    <location>
        <begin position="2887"/>
        <end position="2889"/>
    </location>
</feature>
<feature type="strand" evidence="10">
    <location>
        <begin position="2892"/>
        <end position="2899"/>
    </location>
</feature>
<feature type="helix" evidence="10">
    <location>
        <begin position="2906"/>
        <end position="2914"/>
    </location>
</feature>
<feature type="strand" evidence="10">
    <location>
        <begin position="2921"/>
        <end position="2927"/>
    </location>
</feature>
<feature type="helix" evidence="10">
    <location>
        <begin position="2929"/>
        <end position="2931"/>
    </location>
</feature>
<feature type="helix" evidence="10">
    <location>
        <begin position="2932"/>
        <end position="2944"/>
    </location>
</feature>
<feature type="strand" evidence="10">
    <location>
        <begin position="2951"/>
        <end position="2958"/>
    </location>
</feature>
<feature type="helix" evidence="10">
    <location>
        <begin position="2961"/>
        <end position="2963"/>
    </location>
</feature>
<feature type="strand" evidence="10">
    <location>
        <begin position="2967"/>
        <end position="2969"/>
    </location>
</feature>
<feature type="helix" evidence="10">
    <location>
        <begin position="2970"/>
        <end position="2978"/>
    </location>
</feature>
<feature type="strand" evidence="10">
    <location>
        <begin position="2982"/>
        <end position="2991"/>
    </location>
</feature>
<feature type="strand" evidence="10">
    <location>
        <begin position="3000"/>
        <end position="3009"/>
    </location>
</feature>
<feature type="strand" evidence="10">
    <location>
        <begin position="3016"/>
        <end position="3022"/>
    </location>
</feature>
<feature type="strand" evidence="10">
    <location>
        <begin position="3025"/>
        <end position="3030"/>
    </location>
</feature>
<feature type="helix" evidence="10">
    <location>
        <begin position="3034"/>
        <end position="3053"/>
    </location>
</feature>
<feature type="turn" evidence="10">
    <location>
        <begin position="3054"/>
        <end position="3056"/>
    </location>
</feature>
<feature type="strand" evidence="10">
    <location>
        <begin position="3063"/>
        <end position="3070"/>
    </location>
</feature>
<feature type="helix" evidence="10">
    <location>
        <begin position="3075"/>
        <end position="3084"/>
    </location>
</feature>
<feature type="helix" evidence="10">
    <location>
        <begin position="3089"/>
        <end position="3092"/>
    </location>
</feature>
<feature type="helix" evidence="10">
    <location>
        <begin position="3093"/>
        <end position="3102"/>
    </location>
</feature>
<feature type="helix" evidence="10">
    <location>
        <begin position="3108"/>
        <end position="3118"/>
    </location>
</feature>
<feature type="strand" evidence="10">
    <location>
        <begin position="3125"/>
        <end position="3133"/>
    </location>
</feature>
<feature type="turn" evidence="10">
    <location>
        <begin position="3134"/>
        <end position="3136"/>
    </location>
</feature>
<feature type="strand" evidence="10">
    <location>
        <begin position="3137"/>
        <end position="3145"/>
    </location>
</feature>
<dbReference type="EC" id="2.3.1.-"/>
<dbReference type="EC" id="2.3.1.74"/>
<dbReference type="EMBL" id="AAFI02000005">
    <property type="protein sequence ID" value="EAL72032.1"/>
    <property type="molecule type" value="Genomic_DNA"/>
</dbReference>
<dbReference type="RefSeq" id="XP_645909.1">
    <property type="nucleotide sequence ID" value="XM_640817.1"/>
</dbReference>
<dbReference type="PDB" id="2H84">
    <property type="method" value="X-ray"/>
    <property type="resolution" value="2.90 A"/>
    <property type="chains" value="A/B=2776-3147"/>
</dbReference>
<dbReference type="PDBsum" id="2H84"/>
<dbReference type="SMR" id="Q55E72"/>
<dbReference type="STRING" id="44689.Q55E72"/>
<dbReference type="GlyGen" id="Q55E72">
    <property type="glycosylation" value="2 sites"/>
</dbReference>
<dbReference type="PaxDb" id="44689-DDB0234164"/>
<dbReference type="EnsemblProtists" id="EAL72032">
    <property type="protein sequence ID" value="EAL72032"/>
    <property type="gene ID" value="DDB_G0269364"/>
</dbReference>
<dbReference type="GeneID" id="8616850"/>
<dbReference type="KEGG" id="ddi:DDB_G0269364"/>
<dbReference type="dictyBase" id="DDB_G0269364">
    <property type="gene designation" value="stlA"/>
</dbReference>
<dbReference type="VEuPathDB" id="AmoebaDB:DDB_G0269364"/>
<dbReference type="eggNOG" id="KOG1202">
    <property type="taxonomic scope" value="Eukaryota"/>
</dbReference>
<dbReference type="HOGENOM" id="CLU_000022_31_5_1"/>
<dbReference type="InParanoid" id="Q55E72"/>
<dbReference type="OMA" id="KDVQHYT"/>
<dbReference type="PhylomeDB" id="Q55E72"/>
<dbReference type="Reactome" id="R-DDI-199220">
    <property type="pathway name" value="Vitamin B5 (pantothenate) metabolism"/>
</dbReference>
<dbReference type="Reactome" id="R-DDI-75105">
    <property type="pathway name" value="Fatty acyl-CoA biosynthesis"/>
</dbReference>
<dbReference type="UniPathway" id="UPA00154"/>
<dbReference type="EvolutionaryTrace" id="Q55E72"/>
<dbReference type="PRO" id="PR:Q55E72"/>
<dbReference type="Proteomes" id="UP000002195">
    <property type="component" value="Chromosome 1"/>
</dbReference>
<dbReference type="GO" id="GO:0004315">
    <property type="term" value="F:3-oxoacyl-[acyl-carrier-protein] synthase activity"/>
    <property type="evidence" value="ECO:0007669"/>
    <property type="project" value="InterPro"/>
</dbReference>
<dbReference type="GO" id="GO:0004312">
    <property type="term" value="F:fatty acid synthase activity"/>
    <property type="evidence" value="ECO:0000318"/>
    <property type="project" value="GO_Central"/>
</dbReference>
<dbReference type="GO" id="GO:0016210">
    <property type="term" value="F:naringenin-chalcone synthase activity"/>
    <property type="evidence" value="ECO:0007669"/>
    <property type="project" value="UniProtKB-EC"/>
</dbReference>
<dbReference type="GO" id="GO:0016491">
    <property type="term" value="F:oxidoreductase activity"/>
    <property type="evidence" value="ECO:0007669"/>
    <property type="project" value="InterPro"/>
</dbReference>
<dbReference type="GO" id="GO:0031152">
    <property type="term" value="P:aggregation involved in sorocarp development"/>
    <property type="evidence" value="ECO:0000315"/>
    <property type="project" value="dictyBase"/>
</dbReference>
<dbReference type="GO" id="GO:0043327">
    <property type="term" value="P:chemotaxis to cAMP"/>
    <property type="evidence" value="ECO:0000315"/>
    <property type="project" value="dictyBase"/>
</dbReference>
<dbReference type="GO" id="GO:0006633">
    <property type="term" value="P:fatty acid biosynthetic process"/>
    <property type="evidence" value="ECO:0000318"/>
    <property type="project" value="GO_Central"/>
</dbReference>
<dbReference type="GO" id="GO:0009813">
    <property type="term" value="P:flavonoid biosynthetic process"/>
    <property type="evidence" value="ECO:0007669"/>
    <property type="project" value="UniProtKB-UniPathway"/>
</dbReference>
<dbReference type="GO" id="GO:0010629">
    <property type="term" value="P:negative regulation of gene expression"/>
    <property type="evidence" value="ECO:0000315"/>
    <property type="project" value="dictyBase"/>
</dbReference>
<dbReference type="GO" id="GO:0030639">
    <property type="term" value="P:polyketide biosynthetic process"/>
    <property type="evidence" value="ECO:0000314"/>
    <property type="project" value="dictyBase"/>
</dbReference>
<dbReference type="GO" id="GO:0010628">
    <property type="term" value="P:positive regulation of gene expression"/>
    <property type="evidence" value="ECO:0000315"/>
    <property type="project" value="dictyBase"/>
</dbReference>
<dbReference type="GO" id="GO:0106070">
    <property type="term" value="P:regulation of adenylate cyclase-activating G protein-coupled receptor signaling pathway"/>
    <property type="evidence" value="ECO:0000315"/>
    <property type="project" value="dictyBase"/>
</dbReference>
<dbReference type="GO" id="GO:0019505">
    <property type="term" value="P:resorcinol metabolic process"/>
    <property type="evidence" value="ECO:0000314"/>
    <property type="project" value="dictyBase"/>
</dbReference>
<dbReference type="GO" id="GO:0007165">
    <property type="term" value="P:signal transduction"/>
    <property type="evidence" value="ECO:0000314"/>
    <property type="project" value="dictyBase"/>
</dbReference>
<dbReference type="GO" id="GO:0048837">
    <property type="term" value="P:sorocarp sorus development"/>
    <property type="evidence" value="ECO:0000315"/>
    <property type="project" value="dictyBase"/>
</dbReference>
<dbReference type="GO" id="GO:0044671">
    <property type="term" value="P:sorocarp spore cell differentiation"/>
    <property type="evidence" value="ECO:0000315"/>
    <property type="project" value="dictyBase"/>
</dbReference>
<dbReference type="GO" id="GO:0031149">
    <property type="term" value="P:sorocarp stalk cell differentiation"/>
    <property type="evidence" value="ECO:0000316"/>
    <property type="project" value="dictyBase"/>
</dbReference>
<dbReference type="CDD" id="cd02440">
    <property type="entry name" value="AdoMet_MTases"/>
    <property type="match status" value="1"/>
</dbReference>
<dbReference type="CDD" id="cd00831">
    <property type="entry name" value="CHS_like"/>
    <property type="match status" value="1"/>
</dbReference>
<dbReference type="CDD" id="cd05195">
    <property type="entry name" value="enoyl_red"/>
    <property type="match status" value="1"/>
</dbReference>
<dbReference type="CDD" id="cd08954">
    <property type="entry name" value="KR_1_FAS_SDR_x"/>
    <property type="match status" value="1"/>
</dbReference>
<dbReference type="CDD" id="cd00833">
    <property type="entry name" value="PKS"/>
    <property type="match status" value="1"/>
</dbReference>
<dbReference type="FunFam" id="3.40.47.10:FF:000025">
    <property type="entry name" value="Chalcone synthase 2"/>
    <property type="match status" value="1"/>
</dbReference>
<dbReference type="FunFam" id="3.10.129.110:FF:000009">
    <property type="entry name" value="Probable polyketide synthase 2"/>
    <property type="match status" value="1"/>
</dbReference>
<dbReference type="FunFam" id="3.40.366.10:FF:000002">
    <property type="entry name" value="Probable polyketide synthase 2"/>
    <property type="match status" value="1"/>
</dbReference>
<dbReference type="FunFam" id="3.40.47.10:FF:000091">
    <property type="entry name" value="Probable polyketide synthase 32"/>
    <property type="match status" value="1"/>
</dbReference>
<dbReference type="Gene3D" id="3.40.47.10">
    <property type="match status" value="3"/>
</dbReference>
<dbReference type="Gene3D" id="1.10.1200.10">
    <property type="entry name" value="ACP-like"/>
    <property type="match status" value="1"/>
</dbReference>
<dbReference type="Gene3D" id="3.40.366.10">
    <property type="entry name" value="Malonyl-Coenzyme A Acyl Carrier Protein, domain 2"/>
    <property type="match status" value="1"/>
</dbReference>
<dbReference type="Gene3D" id="3.90.180.10">
    <property type="entry name" value="Medium-chain alcohol dehydrogenases, catalytic domain"/>
    <property type="match status" value="1"/>
</dbReference>
<dbReference type="Gene3D" id="3.40.50.720">
    <property type="entry name" value="NAD(P)-binding Rossmann-like Domain"/>
    <property type="match status" value="2"/>
</dbReference>
<dbReference type="Gene3D" id="3.10.129.110">
    <property type="entry name" value="Polyketide synthase dehydratase"/>
    <property type="match status" value="1"/>
</dbReference>
<dbReference type="Gene3D" id="3.40.50.150">
    <property type="entry name" value="Vaccinia Virus protein VP39"/>
    <property type="match status" value="1"/>
</dbReference>
<dbReference type="InterPro" id="IPR001227">
    <property type="entry name" value="Ac_transferase_dom_sf"/>
</dbReference>
<dbReference type="InterPro" id="IPR036736">
    <property type="entry name" value="ACP-like_sf"/>
</dbReference>
<dbReference type="InterPro" id="IPR014043">
    <property type="entry name" value="Acyl_transferase_dom"/>
</dbReference>
<dbReference type="InterPro" id="IPR016035">
    <property type="entry name" value="Acyl_Trfase/lysoPLipase"/>
</dbReference>
<dbReference type="InterPro" id="IPR013154">
    <property type="entry name" value="ADH-like_N"/>
</dbReference>
<dbReference type="InterPro" id="IPR012328">
    <property type="entry name" value="Chalcone/stilbene_synt_C"/>
</dbReference>
<dbReference type="InterPro" id="IPR001099">
    <property type="entry name" value="Chalcone/stilbene_synt_N"/>
</dbReference>
<dbReference type="InterPro" id="IPR011032">
    <property type="entry name" value="GroES-like_sf"/>
</dbReference>
<dbReference type="InterPro" id="IPR018201">
    <property type="entry name" value="Ketoacyl_synth_AS"/>
</dbReference>
<dbReference type="InterPro" id="IPR014031">
    <property type="entry name" value="Ketoacyl_synth_C"/>
</dbReference>
<dbReference type="InterPro" id="IPR014030">
    <property type="entry name" value="Ketoacyl_synth_N"/>
</dbReference>
<dbReference type="InterPro" id="IPR016036">
    <property type="entry name" value="Malonyl_transacylase_ACP-bd"/>
</dbReference>
<dbReference type="InterPro" id="IPR013217">
    <property type="entry name" value="Methyltransf_12"/>
</dbReference>
<dbReference type="InterPro" id="IPR036291">
    <property type="entry name" value="NAD(P)-bd_dom_sf"/>
</dbReference>
<dbReference type="InterPro" id="IPR032821">
    <property type="entry name" value="PKS_assoc"/>
</dbReference>
<dbReference type="InterPro" id="IPR020841">
    <property type="entry name" value="PKS_Beta-ketoAc_synthase_dom"/>
</dbReference>
<dbReference type="InterPro" id="IPR042104">
    <property type="entry name" value="PKS_dehydratase_sf"/>
</dbReference>
<dbReference type="InterPro" id="IPR049551">
    <property type="entry name" value="PKS_DH_C"/>
</dbReference>
<dbReference type="InterPro" id="IPR049552">
    <property type="entry name" value="PKS_DH_N"/>
</dbReference>
<dbReference type="InterPro" id="IPR020843">
    <property type="entry name" value="PKS_ER"/>
</dbReference>
<dbReference type="InterPro" id="IPR013968">
    <property type="entry name" value="PKS_KR"/>
</dbReference>
<dbReference type="InterPro" id="IPR049900">
    <property type="entry name" value="PKS_mFAS_DH"/>
</dbReference>
<dbReference type="InterPro" id="IPR050444">
    <property type="entry name" value="Polyketide_Synthase"/>
</dbReference>
<dbReference type="InterPro" id="IPR009081">
    <property type="entry name" value="PP-bd_ACP"/>
</dbReference>
<dbReference type="InterPro" id="IPR029063">
    <property type="entry name" value="SAM-dependent_MTases_sf"/>
</dbReference>
<dbReference type="InterPro" id="IPR016039">
    <property type="entry name" value="Thiolase-like"/>
</dbReference>
<dbReference type="PANTHER" id="PTHR45681:SF6">
    <property type="entry name" value="POLYKETIDE SYNTHASE 37"/>
    <property type="match status" value="1"/>
</dbReference>
<dbReference type="PANTHER" id="PTHR45681">
    <property type="entry name" value="POLYKETIDE SYNTHASE 44-RELATED"/>
    <property type="match status" value="1"/>
</dbReference>
<dbReference type="Pfam" id="PF23297">
    <property type="entry name" value="ACP_SdgA_C"/>
    <property type="match status" value="1"/>
</dbReference>
<dbReference type="Pfam" id="PF00698">
    <property type="entry name" value="Acyl_transf_1"/>
    <property type="match status" value="1"/>
</dbReference>
<dbReference type="Pfam" id="PF08240">
    <property type="entry name" value="ADH_N"/>
    <property type="match status" value="1"/>
</dbReference>
<dbReference type="Pfam" id="PF13602">
    <property type="entry name" value="ADH_zinc_N_2"/>
    <property type="match status" value="1"/>
</dbReference>
<dbReference type="Pfam" id="PF02797">
    <property type="entry name" value="Chal_sti_synt_C"/>
    <property type="match status" value="1"/>
</dbReference>
<dbReference type="Pfam" id="PF00195">
    <property type="entry name" value="Chal_sti_synt_N"/>
    <property type="match status" value="1"/>
</dbReference>
<dbReference type="Pfam" id="PF16197">
    <property type="entry name" value="KAsynt_C_assoc"/>
    <property type="match status" value="1"/>
</dbReference>
<dbReference type="Pfam" id="PF00109">
    <property type="entry name" value="ketoacyl-synt"/>
    <property type="match status" value="1"/>
</dbReference>
<dbReference type="Pfam" id="PF02801">
    <property type="entry name" value="Ketoacyl-synt_C"/>
    <property type="match status" value="2"/>
</dbReference>
<dbReference type="Pfam" id="PF08659">
    <property type="entry name" value="KR"/>
    <property type="match status" value="1"/>
</dbReference>
<dbReference type="Pfam" id="PF08242">
    <property type="entry name" value="Methyltransf_12"/>
    <property type="match status" value="1"/>
</dbReference>
<dbReference type="Pfam" id="PF21089">
    <property type="entry name" value="PKS_DH_N"/>
    <property type="match status" value="1"/>
</dbReference>
<dbReference type="Pfam" id="PF14765">
    <property type="entry name" value="PS-DH"/>
    <property type="match status" value="1"/>
</dbReference>
<dbReference type="SMART" id="SM00827">
    <property type="entry name" value="PKS_AT"/>
    <property type="match status" value="1"/>
</dbReference>
<dbReference type="SMART" id="SM00829">
    <property type="entry name" value="PKS_ER"/>
    <property type="match status" value="1"/>
</dbReference>
<dbReference type="SMART" id="SM00822">
    <property type="entry name" value="PKS_KR"/>
    <property type="match status" value="1"/>
</dbReference>
<dbReference type="SMART" id="SM00825">
    <property type="entry name" value="PKS_KS"/>
    <property type="match status" value="1"/>
</dbReference>
<dbReference type="SUPFAM" id="SSF47336">
    <property type="entry name" value="ACP-like"/>
    <property type="match status" value="1"/>
</dbReference>
<dbReference type="SUPFAM" id="SSF52151">
    <property type="entry name" value="FabD/lysophospholipase-like"/>
    <property type="match status" value="1"/>
</dbReference>
<dbReference type="SUPFAM" id="SSF50129">
    <property type="entry name" value="GroES-like"/>
    <property type="match status" value="1"/>
</dbReference>
<dbReference type="SUPFAM" id="SSF51735">
    <property type="entry name" value="NAD(P)-binding Rossmann-fold domains"/>
    <property type="match status" value="2"/>
</dbReference>
<dbReference type="SUPFAM" id="SSF55048">
    <property type="entry name" value="Probable ACP-binding domain of malonyl-CoA ACP transacylase"/>
    <property type="match status" value="1"/>
</dbReference>
<dbReference type="SUPFAM" id="SSF53335">
    <property type="entry name" value="S-adenosyl-L-methionine-dependent methyltransferases"/>
    <property type="match status" value="1"/>
</dbReference>
<dbReference type="SUPFAM" id="SSF53901">
    <property type="entry name" value="Thiolase-like"/>
    <property type="match status" value="3"/>
</dbReference>
<dbReference type="PROSITE" id="PS50075">
    <property type="entry name" value="CARRIER"/>
    <property type="match status" value="1"/>
</dbReference>
<dbReference type="PROSITE" id="PS00606">
    <property type="entry name" value="KS3_1"/>
    <property type="match status" value="1"/>
</dbReference>
<dbReference type="PROSITE" id="PS52004">
    <property type="entry name" value="KS3_2"/>
    <property type="match status" value="1"/>
</dbReference>
<dbReference type="PROSITE" id="PS00012">
    <property type="entry name" value="PHOSPHOPANTETHEINE"/>
    <property type="match status" value="1"/>
</dbReference>
<dbReference type="PROSITE" id="PS52019">
    <property type="entry name" value="PKS_MFAS_DH"/>
    <property type="match status" value="1"/>
</dbReference>
<protein>
    <recommendedName>
        <fullName>Probable polyketide synthase 1</fullName>
        <shortName>dipks1</shortName>
    </recommendedName>
    <domain>
        <recommendedName>
            <fullName>Polyketide synthase stlA</fullName>
            <ecNumber>2.3.1.-</ecNumber>
        </recommendedName>
    </domain>
    <domain>
        <recommendedName>
            <fullName>Chalcone synthase stlA</fullName>
            <ecNumber>2.3.1.74</ecNumber>
        </recommendedName>
        <alternativeName>
            <fullName>Steely1</fullName>
        </alternativeName>
    </domain>
</protein>
<sequence length="3147" mass="352195">MNKNSKIQSPNSSDVAVIGVGFRFPGNSNDPESLWNNLLDGFDAITQVPKERWATSFREMGLIKNKFGGFLKDSEWKNFDPLFFGIGPKEAPFIDPQQRLLLSIVWESLEDAYIRPDELRGSNTGVFIGVSNNDYTKLGFQDNYSISPYTMTGSNSSLNSNRISYCFDFRGPSITVDTACSSSLVSVNLGVQSIQMGECKIAICGGVNALFDPSTSVAFSKLGVLSENGRCNSFSDQASGYVRSEGAGVVVLKSLEQAKLDGDRIYGVIKGVSSNEDGASNGDKNSLTTPSCEAQSINISKAMEKASLSPSDIYYIEAHGTGTPVGDPIEVKALSKIFSNSNNNQLNNFSTDGNDNDDDDDDNTSPEPLLIGSFKSNIGHLESAAGIASLIKCCLMLKNRMLVPSINCSNLNPSIPFDQYNISVIREIRQFPTDKLVNIGINSFGFGGSNCHLIIQEYNNNFKNNSTICNNNNNNNNNIDYLIPISSKTKKSLDKYLILIKTNSNYHKDISFDDFVKFQIKSKQYNLSNRMTTIANDWNSFIKGSNEFHNLIESKDGEGGSSSSNRGIDSANQINTTTTSTINDIEPLLVFVFCGQGPQWNGMIKTLYNSENVFKNTVDHVDSILYKYFGYSILNVLSKIDDNDDSINHPIVAQPSLFLLQIGLVELFKYWGIYPSISVGHSFGEVSSYYLSGIISLETACKIVYVRSSNQNKTMGSGKMLVVSMGFKQWNDQFSAEWSDIEIACYNAPDSIVVTGNEERLKELSIKLSDESNQIFNTFLRSPCSFHSSHQEVIKGSMFEELSNLQSTGETEIPLFSTVTGRQVLSGHVTAQHIYDNVREPVLFQKTIESITSYIKSHYPSNQKVIYVEIAPHPTLFSLIKKSIPSSNKNSSSVLCPLNRKENSNNSYKKFVSQLYFNGVNVDFNFQLNSICDNVNNDHHLNNVKQNSFKETTNSLPRYQWEQDEYWSEPLISRKNRLEGPTTSLLGHRIIYSFPVFQSVLDLQSDNYKYLLDHLVNGKPVFPGAGYLDIIIEFFDYQKQQLNSSDSSNSYIINVDKIQFLNPIHLTENKLQTLQSSFEPIVTKKSAFSVNFFIKDTVEDQSKVKSMSDETWTNTCKATISLEQQQPSPSSTLTLSKKQDLQILRNRCDISKLDKFELYDKISKNLGLQYNSLFQVVDTIETGKDCSFATLSLPEDTLFTTILNPCLLDNCFHGLLTLINEKGSFVVESISSVSIYLENIGSFNQTSVGNVQFYLYTTISKATSFSSEGTCKLFTKDGSLILSIGKFIIKSTNPKSTKTNETIESPLDETFSIEWQSKDSPIPTPQQIQQQSPLNSNPSFIRSTILKDIQFEQYCSSIIHKELINHEKYKNQQSFDINSLENHLNDDQLMESLSISKEYLRFFTRIISIIKQYPKILNEKELKELKEIIELKYPSEVQLLEFEVIEKVSMIIPKLLFENDKQSSMTLFQDNLLTRFYSNSNSTRFYLERVSEMVLESIRPIVREKRVFRILEIGAGTGSLSNVVLTKLNTYLSTLNSNGGSGYNIIIEYTFTDISANFIIGEIQETMCNLYPNVTFKFSVLDLEKEIINSSDFLMGDYDIVLMAYVIHAVSNIKFSIEQLYKLLSPRGWLLCIEPKSNVVFSDLVFGCFNQWWNYYDDIRTTHCSLSESQWNQLLLNQSLNNESSSSSNCYGGFSNVSFIGGEKDVDSHSFILHCQKESISQMKLATTINNGLSSGSIVIVLNSQQLTNMKSYPKVIEYIQEATSLCKTIEIIDSKDVLNSTNSVLEKIQKSLLVFCLLGYDLLENNYQEQSFEYVKLLNLISTTASSSNDKKPPKVLLITKQSERISRSFYSRSLIGISRTSMNEYPNLSITSIDLDTNDYSLQSLLKPIFSNSKFSDNEFIFKKGLMFVSRIFKNKQLLESSNAFETDSSNLYCKASSDLSYKYAIKQSMLTENQIEIKVECVGINFKDNLFYKGLLPQEIFRMGDIYNPPYGLECSGVITRIGSNVTEYSVGQNVFGFARHSLGSHVVTNKDLVILKPDTISFSEAASIPVVYCTAWYSLFNIGQLSNEESILIHSATGGVGLASLNLLKMKNQQQQPLTNVYATVGSNEKKKFLIDNFNNLFKEDGENIFSTRDKEYSNQLESKIDVILNTLSGEFVESNFKSLRSFGRLIDLSATHVYANQQIGLGNFKFDHLYSAVDLERLIDEKPKLLQSILQRITNSIVNGSLEKIPITIFPSTETKDAIELLSKRSHIGKVVVDCTDISKCNPVGDVITNFSMRLPKPNYQLNLNSTLLITGQSGLSIPLLNWLLSKSGGNVKNVVIISKSTMKWKLQTMISHFVSGFGIHFNYVQVDISNYDALSEAIKQLPSDLPPITSVFHLAAIYNDVPMDQVTMSTVESVHNPKVLGAVNLHRISVSFGWKLNHFVLFSSITAITGYPDQSIYNSANSILDALSNFRRFMGLPSFSINLGPMKDEGKVSTNKSIKKLFKSRGLPSLSLNKLFGLLEVVINNPSNHVIPSQLICSPIDFKTYIESFSTMRPKLLHLQPTISKQQSSIINDSTKASSNISLQDKITSKVSDLLSIPISKINFDHPLKHYGLDSLLTVQFKSWIDKEFEKNLFTHIQLATISINSFLEKVNGLSTNNNNNNNSNVKSSPSIVKEEIVTLDKDQQPLLLKEHQHIIISPDIRINKPKRESLIRTPILNKFNQITESIITPSTPSLSQSDVLKTPPIKSLNNTKNSSLINTPPIQSVQQHQKQQQKVQVIQQQQQPLSRLSYKSNNNSFVLGIGISVPGEPISQQSLKDSISNDFSDKAETNEKVKRIFEQSQIKTRHLVRDYTKPENSIKFRHLETITDVNNQFKKVVPDLAQQACLRALKDWGGDKGDITHIVSVTSTGIIIPDVNFKLIDLLGLNKDVERVSLNLMGCLAGLSSLRTAASLAKASPRNRILVVCTEVCSLHFSNTDGGDQMVASSIFADGSAAYIIGCNPRIEETPLYEVMCSINRSFPNTENAMVWDLEKEGWNLGLDASIPIVIGSGIEAFVDTLLDKAKLQTSTAISAKDCEFLIHTGGKSILMNIENSLGIDPKQTKNTWDVYHAYGNMSSASVIFVMDHARKSKSLPTYSISLAFGPGLAFEGCFLKNVV</sequence>
<reference key="1">
    <citation type="journal article" date="2005" name="Nature">
        <title>The genome of the social amoeba Dictyostelium discoideum.</title>
        <authorList>
            <person name="Eichinger L."/>
            <person name="Pachebat J.A."/>
            <person name="Gloeckner G."/>
            <person name="Rajandream M.A."/>
            <person name="Sucgang R."/>
            <person name="Berriman M."/>
            <person name="Song J."/>
            <person name="Olsen R."/>
            <person name="Szafranski K."/>
            <person name="Xu Q."/>
            <person name="Tunggal B."/>
            <person name="Kummerfeld S."/>
            <person name="Madera M."/>
            <person name="Konfortov B.A."/>
            <person name="Rivero F."/>
            <person name="Bankier A.T."/>
            <person name="Lehmann R."/>
            <person name="Hamlin N."/>
            <person name="Davies R."/>
            <person name="Gaudet P."/>
            <person name="Fey P."/>
            <person name="Pilcher K."/>
            <person name="Chen G."/>
            <person name="Saunders D."/>
            <person name="Sodergren E.J."/>
            <person name="Davis P."/>
            <person name="Kerhornou A."/>
            <person name="Nie X."/>
            <person name="Hall N."/>
            <person name="Anjard C."/>
            <person name="Hemphill L."/>
            <person name="Bason N."/>
            <person name="Farbrother P."/>
            <person name="Desany B."/>
            <person name="Just E."/>
            <person name="Morio T."/>
            <person name="Rost R."/>
            <person name="Churcher C.M."/>
            <person name="Cooper J."/>
            <person name="Haydock S."/>
            <person name="van Driessche N."/>
            <person name="Cronin A."/>
            <person name="Goodhead I."/>
            <person name="Muzny D.M."/>
            <person name="Mourier T."/>
            <person name="Pain A."/>
            <person name="Lu M."/>
            <person name="Harper D."/>
            <person name="Lindsay R."/>
            <person name="Hauser H."/>
            <person name="James K.D."/>
            <person name="Quiles M."/>
            <person name="Madan Babu M."/>
            <person name="Saito T."/>
            <person name="Buchrieser C."/>
            <person name="Wardroper A."/>
            <person name="Felder M."/>
            <person name="Thangavelu M."/>
            <person name="Johnson D."/>
            <person name="Knights A."/>
            <person name="Loulseged H."/>
            <person name="Mungall K.L."/>
            <person name="Oliver K."/>
            <person name="Price C."/>
            <person name="Quail M.A."/>
            <person name="Urushihara H."/>
            <person name="Hernandez J."/>
            <person name="Rabbinowitsch E."/>
            <person name="Steffen D."/>
            <person name="Sanders M."/>
            <person name="Ma J."/>
            <person name="Kohara Y."/>
            <person name="Sharp S."/>
            <person name="Simmonds M.N."/>
            <person name="Spiegler S."/>
            <person name="Tivey A."/>
            <person name="Sugano S."/>
            <person name="White B."/>
            <person name="Walker D."/>
            <person name="Woodward J.R."/>
            <person name="Winckler T."/>
            <person name="Tanaka Y."/>
            <person name="Shaulsky G."/>
            <person name="Schleicher M."/>
            <person name="Weinstock G.M."/>
            <person name="Rosenthal A."/>
            <person name="Cox E.C."/>
            <person name="Chisholm R.L."/>
            <person name="Gibbs R.A."/>
            <person name="Loomis W.F."/>
            <person name="Platzer M."/>
            <person name="Kay R.R."/>
            <person name="Williams J.G."/>
            <person name="Dear P.H."/>
            <person name="Noegel A.A."/>
            <person name="Barrell B.G."/>
            <person name="Kuspa A."/>
        </authorList>
    </citation>
    <scope>NUCLEOTIDE SEQUENCE [LARGE SCALE GENOMIC DNA]</scope>
    <source>
        <strain>AX4</strain>
    </source>
</reference>
<reference key="2">
    <citation type="journal article" date="2007" name="Bioinformatics">
        <title>Polyketide synthase genes and the natural products potential of Dictyostelium discoideum.</title>
        <authorList>
            <person name="Zucko J."/>
            <person name="Skunca N."/>
            <person name="Curk T."/>
            <person name="Zupan B."/>
            <person name="Long P.F."/>
            <person name="Cullum J."/>
            <person name="Kessin R.H."/>
            <person name="Hranueli D."/>
        </authorList>
    </citation>
    <scope>IDENTIFICATION</scope>
</reference>
<reference key="3">
    <citation type="journal article" date="2006" name="Nat. Chem. Biol.">
        <title>Biosynthesis of Dictyostelium discoideum differentiation-inducing factor by a hybrid type I fatty acid-type III polyketide synthase.</title>
        <authorList>
            <person name="Austin M.B."/>
            <person name="Saito T."/>
            <person name="Bowman M.E."/>
            <person name="Haydock S."/>
            <person name="Kato A."/>
            <person name="Moore B.S."/>
            <person name="Kay R.R."/>
            <person name="Noel J.P."/>
        </authorList>
    </citation>
    <scope>X-RAY CRYSTALLOGRAPHY (2.9 ANGSTROMS) OF 2776-3147</scope>
    <scope>FUNCTION</scope>
    <scope>DEVELOPMENTAL STAGE</scope>
    <scope>SUBUNIT</scope>
</reference>
<proteinExistence type="evidence at protein level"/>
<gene>
    <name type="primary">stlA</name>
    <name type="synonym">pks1</name>
    <name type="ORF">DDB_G0269364</name>
</gene>
<organism>
    <name type="scientific">Dictyostelium discoideum</name>
    <name type="common">Social amoeba</name>
    <dbReference type="NCBI Taxonomy" id="44689"/>
    <lineage>
        <taxon>Eukaryota</taxon>
        <taxon>Amoebozoa</taxon>
        <taxon>Evosea</taxon>
        <taxon>Eumycetozoa</taxon>
        <taxon>Dictyostelia</taxon>
        <taxon>Dictyosteliales</taxon>
        <taxon>Dictyosteliaceae</taxon>
        <taxon>Dictyostelium</taxon>
    </lineage>
</organism>
<accession>Q55E72</accession>
<keyword id="KW-0002">3D-structure</keyword>
<keyword id="KW-0012">Acyltransferase</keyword>
<keyword id="KW-0284">Flavonoid biosynthesis</keyword>
<keyword id="KW-0596">Phosphopantetheine</keyword>
<keyword id="KW-0597">Phosphoprotein</keyword>
<keyword id="KW-1185">Reference proteome</keyword>
<keyword id="KW-0808">Transferase</keyword>
<name>PKS1_DICDI</name>